<reference key="1">
    <citation type="journal article" date="1995" name="Dev. Biol.">
        <title>The mouse 14-3-3 epsilon isoform, a kinase regulator whose expression pattern is modulated in mesenchyme and neuronal differentiation.</title>
        <authorList>
            <person name="McConnell J.E."/>
            <person name="Armstrong J.F."/>
            <person name="Bard J.B."/>
        </authorList>
    </citation>
    <scope>NUCLEOTIDE SEQUENCE [MRNA]</scope>
    <scope>DEVELOPMENTAL STAGE</scope>
    <source>
        <strain>SWR/J</strain>
        <tissue>Kidney</tissue>
    </source>
</reference>
<reference key="2">
    <citation type="submission" date="1996-09" db="EMBL/GenBank/DDBJ databases">
        <authorList>
            <person name="Takihara Y."/>
            <person name="Irie K."/>
            <person name="Nomura M."/>
            <person name="Motaleb M."/>
            <person name="Matsumoto K."/>
            <person name="Shimada K."/>
        </authorList>
    </citation>
    <scope>NUCLEOTIDE SEQUENCE [MRNA]</scope>
    <source>
        <strain>129/Sv</strain>
    </source>
</reference>
<reference key="3">
    <citation type="journal article" date="2001" name="Mamm. Genome">
        <title>High-throughput sequence identification of gene coding variants within alcohol-related QTLs.</title>
        <authorList>
            <person name="Ehringer M.A."/>
            <person name="Thompson J."/>
            <person name="Conroy O."/>
            <person name="Xu Y."/>
            <person name="Yang F."/>
            <person name="Canniff J."/>
            <person name="Beeson M."/>
            <person name="Gordon L."/>
            <person name="Bennett B."/>
            <person name="Johnson T.E."/>
            <person name="Sikela J.M."/>
        </authorList>
    </citation>
    <scope>NUCLEOTIDE SEQUENCE [MRNA]</scope>
    <source>
        <strain>ILS</strain>
        <strain>ISS</strain>
    </source>
</reference>
<reference key="4">
    <citation type="journal article" date="2004" name="Genome Res.">
        <title>The status, quality, and expansion of the NIH full-length cDNA project: the Mammalian Gene Collection (MGC).</title>
        <authorList>
            <consortium name="The MGC Project Team"/>
        </authorList>
    </citation>
    <scope>NUCLEOTIDE SEQUENCE [LARGE SCALE MRNA]</scope>
    <source>
        <strain>C57BL/6J</strain>
        <tissue>Brain</tissue>
    </source>
</reference>
<reference key="5">
    <citation type="submission" date="2007-07" db="UniProtKB">
        <authorList>
            <person name="Lubec G."/>
            <person name="Klug S."/>
            <person name="Friebe K."/>
            <person name="Yang J.W."/>
            <person name="Zigmond M."/>
        </authorList>
    </citation>
    <scope>PROTEIN SEQUENCE OF 131-141; 154-170 AND 197-215</scope>
    <scope>IDENTIFICATION BY MASS SPECTROMETRY</scope>
    <source>
        <tissue>Brain</tissue>
        <tissue>Hippocampus</tissue>
    </source>
</reference>
<reference key="6">
    <citation type="journal article" date="1999" name="Mol. Cell. Biol.">
        <title>Kinase suppressor of Ras forms a multiprotein signaling complex and modulates MEK localization.</title>
        <authorList>
            <person name="Stewart S."/>
            <person name="Sundaram M."/>
            <person name="Zhang Y."/>
            <person name="Lee J."/>
            <person name="Han M."/>
            <person name="Guan K.L."/>
        </authorList>
    </citation>
    <scope>INTERACTION WITH KSR1</scope>
</reference>
<reference key="7">
    <citation type="journal article" date="2001" name="J. Biol. Chem.">
        <title>14-3-3 is involved in p75 neurotrophin receptor-mediated signal transduction.</title>
        <authorList>
            <person name="Kimura M.T."/>
            <person name="Irie S."/>
            <person name="Shoji-Hoshino S."/>
            <person name="Mukai J."/>
            <person name="Nadano D."/>
            <person name="Oshimura M."/>
            <person name="Sato T.-A."/>
        </authorList>
    </citation>
    <scope>INTERACTION WITH BEX3</scope>
</reference>
<reference key="8">
    <citation type="journal article" date="2001" name="J. Biol. Chem.">
        <title>Identification of a novel interaction of 14-3-3 with p190RhoGEF.</title>
        <authorList>
            <person name="Zhai J."/>
            <person name="Lin H."/>
            <person name="Shamim M."/>
            <person name="Schlaepfer W.W."/>
            <person name="Canete-Soler R."/>
        </authorList>
    </citation>
    <scope>INTERACTION WITH ARHGEF28</scope>
</reference>
<reference key="9">
    <citation type="journal article" date="2003" name="Nat. Genet.">
        <title>14-3-3epsilon is important for neuronal migration by binding to NUDEL: a molecular explanation for Miller-Dieker syndrome.</title>
        <authorList>
            <person name="Toyo-oka K."/>
            <person name="Shionoya A."/>
            <person name="Gambello M.J."/>
            <person name="Cardoso C."/>
            <person name="Leventer R."/>
            <person name="Ward H.L."/>
            <person name="Ayala R."/>
            <person name="Tsai L.-H."/>
            <person name="Dobyns W."/>
            <person name="Ledbetter D."/>
            <person name="Hirotsune S."/>
            <person name="Wynshaw-Boris A."/>
        </authorList>
    </citation>
    <scope>INTERACTION WITH NDEL1</scope>
</reference>
<reference key="10">
    <citation type="journal article" date="2005" name="J. Biol. Chem.">
        <title>Phosphorylation of grb10 regulates its interaction with 14-3-3.</title>
        <authorList>
            <person name="Urschel S."/>
            <person name="Bassermann F."/>
            <person name="Bai R.Y."/>
            <person name="Munch S."/>
            <person name="Peschel C."/>
            <person name="Duyster J."/>
        </authorList>
    </citation>
    <scope>INTERACTION WITH GRB10</scope>
</reference>
<reference key="11">
    <citation type="journal article" date="2007" name="Biochem. Biophys. Res. Commun.">
        <title>Rho-kinase modulates the function of STEF, a Rac GEF, through its phosphorylation.</title>
        <authorList>
            <person name="Takefuji M."/>
            <person name="Mori K."/>
            <person name="Morita Y."/>
            <person name="Arimura N."/>
            <person name="Nishimura T."/>
            <person name="Nakayama M."/>
            <person name="Hoshino M."/>
            <person name="Iwamatsu A."/>
            <person name="Murohara T."/>
            <person name="Kaibuchi K."/>
            <person name="Amano M."/>
        </authorList>
    </citation>
    <scope>INTERACTION WITH TIAM2</scope>
</reference>
<reference key="12">
    <citation type="journal article" date="2010" name="Cell">
        <title>A tissue-specific atlas of mouse protein phosphorylation and expression.</title>
        <authorList>
            <person name="Huttlin E.L."/>
            <person name="Jedrychowski M.P."/>
            <person name="Elias J.E."/>
            <person name="Goswami T."/>
            <person name="Rad R."/>
            <person name="Beausoleil S.A."/>
            <person name="Villen J."/>
            <person name="Haas W."/>
            <person name="Sowa M.E."/>
            <person name="Gygi S.P."/>
        </authorList>
    </citation>
    <scope>PHOSPHORYLATION [LARGE SCALE ANALYSIS] AT SER-210</scope>
    <scope>IDENTIFICATION BY MASS SPECTROMETRY [LARGE SCALE ANALYSIS]</scope>
    <source>
        <tissue>Brain</tissue>
        <tissue>Brown adipose tissue</tissue>
        <tissue>Heart</tissue>
        <tissue>Kidney</tissue>
        <tissue>Liver</tissue>
        <tissue>Lung</tissue>
        <tissue>Pancreas</tissue>
        <tissue>Spleen</tissue>
        <tissue>Testis</tissue>
    </source>
</reference>
<reference key="13">
    <citation type="journal article" date="2011" name="Mol. Cell. Biol.">
        <title>Phosphorylation of tristetraprolin by MK2 impairs AU-rich element mRNA decay by preventing deadenylase recruitment.</title>
        <authorList>
            <person name="Clement S.L."/>
            <person name="Scheckel C."/>
            <person name="Stoecklin G."/>
            <person name="Lykke-Andersen J."/>
        </authorList>
    </citation>
    <scope>INTERACTION WITH ZFP36</scope>
</reference>
<reference key="14">
    <citation type="journal article" date="2015" name="Biochem. Biophys. Res. Commun.">
        <title>Suppression of death-associated protein kinase 2 by interaction with 14-3-3 proteins.</title>
        <authorList>
            <person name="Yuasa K."/>
            <person name="Ota R."/>
            <person name="Matsuda S."/>
            <person name="Isshiki K."/>
            <person name="Inoue M."/>
            <person name="Tsuji A."/>
        </authorList>
    </citation>
    <scope>INTERACTION WITH DAPK2</scope>
</reference>
<reference key="15">
    <citation type="journal article" date="2018" name="IScience">
        <title>Mitogenic Signals Stimulate the CREB Coactivator CRTC3 through PP2A Recruitment.</title>
        <authorList>
            <person name="Sonntag T."/>
            <person name="Ostojic J."/>
            <person name="Vaughan J.M."/>
            <person name="Moresco J.J."/>
            <person name="Yoon Y.S."/>
            <person name="Yates J.R. III"/>
            <person name="Montminy M."/>
        </authorList>
    </citation>
    <scope>INTERACTION WITH CRTC1; CRTC2 AND CRTC3</scope>
</reference>
<reference key="16">
    <citation type="journal article" date="2019" name="PLoS Biol.">
        <title>Mouse screen reveals multiple new genes underlying mouse and human hearing loss.</title>
        <authorList>
            <person name="Ingham N.J."/>
            <person name="Pearson S.A."/>
            <person name="Vancollie V.E."/>
            <person name="Rook V."/>
            <person name="Lewis M.A."/>
            <person name="Chen J."/>
            <person name="Buniello A."/>
            <person name="Martelletti E."/>
            <person name="Preite L."/>
            <person name="Lam C.C."/>
            <person name="Weiss F.D."/>
            <person name="Powis Z."/>
            <person name="Suwannarat P."/>
            <person name="Lelliott C.J."/>
            <person name="Dawson S.J."/>
            <person name="White J.K."/>
            <person name="Steel K.P."/>
        </authorList>
    </citation>
    <scope>DISRUPTION PHENOTYPE</scope>
</reference>
<name>1433E_MOUSE</name>
<organism>
    <name type="scientific">Mus musculus</name>
    <name type="common">Mouse</name>
    <dbReference type="NCBI Taxonomy" id="10090"/>
    <lineage>
        <taxon>Eukaryota</taxon>
        <taxon>Metazoa</taxon>
        <taxon>Chordata</taxon>
        <taxon>Craniata</taxon>
        <taxon>Vertebrata</taxon>
        <taxon>Euteleostomi</taxon>
        <taxon>Mammalia</taxon>
        <taxon>Eutheria</taxon>
        <taxon>Euarchontoglires</taxon>
        <taxon>Glires</taxon>
        <taxon>Rodentia</taxon>
        <taxon>Myomorpha</taxon>
        <taxon>Muroidea</taxon>
        <taxon>Muridae</taxon>
        <taxon>Murinae</taxon>
        <taxon>Mus</taxon>
        <taxon>Mus</taxon>
    </lineage>
</organism>
<comment type="function">
    <text evidence="2 4">Adapter protein implicated in the regulation of a large spectrum of both general and specialized signaling pathways. Binds to a large number of partners, usually by recognition of a phosphoserine or phosphothreonine motif. Binding generally results in the modulation of the activity of the binding partner. Positively regulates phosphorylated protein HSF1 nuclear export to the cytoplasm.</text>
</comment>
<comment type="subunit">
    <text evidence="2 3 6 7 8 9 10 11 12 13 14">Homodimer (By similarity). Heterodimerizes with YWHAZ (By similarity). Interacts with PKA-phosphorylated AANAT (By similarity). Interacts with ABL1 (phosphorylated form); the interaction retains it in the cytoplasm (By similarity). Interacts with ARHGEF28 (PubMed:11533041). Interacts with BEX3 (PubMed:11278287). Weakly interacts with CDKN1B (By similarity). Interacts with the 'Thr-369' phosphorylated form of DAPK2 (PubMed:26047703). Interacts with DENND1A (By similarity). Interacts with GAB2 (By similarity). Interacts with phosphorylated GRB10 (PubMed:15722337). Interacts with KSR1 (PubMed:10409742). Interacts with NDEL1 (PubMed:12796778). Interacts with PI4KB, TBC1D22A and TBC1D22B (By similarity). Interacts with the phosphorylated (by AKT1) form of SRPK2 (By similarity). Interacts with TIAM2 (PubMed:17320046). Interacts with the 'Ser-1134' and 'Ser-1161' phosphorylated form of SOS1 (By similarity). Interacts with ZFP36 (via phosphorylated form) (PubMed:21078877). Interacts with SLITRK1 (By similarity). Interacts with HSF1 (via phosphorylated form); this interaction promotes HSF1 sequestration in the cytoplasm in a ERK-dependent manner (By similarity). Interacts with RIPOR2 (By similarity). Interacts with KLHL22; required for the nuclear localization of KLHL22 upon amino acid starvation (By similarity). Interacts with CRTC1 (PubMed:30611118). Interacts with CRTC2 (probably when phosphorylated at 'Ser-171') (PubMed:30611118). Interacts with CRTC3 (probably when phosphorylated at 'Ser-162' and/or 'Ser-273') (PubMed:30611118). Interacts with ATP2B1 and ATP2B3; this interaction inhibits calcium-transporting ATPase activity (By similarity). Interacts with MEFV (By similarity). Interacts with RNF115 (By similarity). Interacts with GPR15; this interaction promotes ER-to-Golgi transport of GPR15 (By similarity).</text>
</comment>
<comment type="interaction">
    <interactant intactId="EBI-356480">
        <id>P62259</id>
    </interactant>
    <interactant intactId="EBI-3895153">
        <id>Q8CHQ0</id>
        <label>Fbxo4</label>
    </interactant>
    <organismsDiffer>false</organismsDiffer>
    <experiments>2</experiments>
</comment>
<comment type="interaction">
    <interactant intactId="EBI-356480">
        <id>P62259</id>
    </interactant>
    <interactant intactId="EBI-643830">
        <id>Q8C2B3</id>
        <label>Hdac7</label>
    </interactant>
    <organismsDiffer>false</organismsDiffer>
    <experiments>5</experiments>
</comment>
<comment type="interaction">
    <interactant intactId="EBI-356480">
        <id>P62259</id>
    </interactant>
    <interactant intactId="EBI-2693710">
        <id>Q5S006</id>
        <label>Lrrk2</label>
    </interactant>
    <organismsDiffer>false</organismsDiffer>
    <experiments>4</experiments>
</comment>
<comment type="interaction">
    <interactant intactId="EBI-356480">
        <id>P62259</id>
    </interactant>
    <interactant intactId="EBI-646668">
        <id>Q9ERR1</id>
        <label>Ndel1</label>
    </interactant>
    <organismsDiffer>false</organismsDiffer>
    <experiments>7</experiments>
</comment>
<comment type="interaction">
    <interactant intactId="EBI-356480">
        <id>P62259</id>
    </interactant>
    <interactant intactId="EBI-8077763">
        <id>Q64163-4</id>
        <label>Tfdp2</label>
    </interactant>
    <organismsDiffer>false</organismsDiffer>
    <experiments>6</experiments>
</comment>
<comment type="interaction">
    <interactant intactId="EBI-356480">
        <id>P62259</id>
    </interactant>
    <interactant intactId="EBI-915490">
        <id>O35244</id>
        <label>Prdx6</label>
    </interactant>
    <organismsDiffer>true</organismsDiffer>
    <experiments>2</experiments>
</comment>
<comment type="subcellular location">
    <subcellularLocation>
        <location evidence="2">Nucleus</location>
    </subcellularLocation>
    <subcellularLocation>
        <location evidence="2">Cytoplasm</location>
    </subcellularLocation>
    <subcellularLocation>
        <location evidence="2">Melanosome</location>
    </subcellularLocation>
</comment>
<comment type="developmental stage">
    <text evidence="16">In the 8.5 dpc embryo, expressed throughout the embryo. Within a day, expression was more marked in mesenchyme than elsewhere (e.g. epithelial tissue, where it was generally low), although levels in neural tissue rose again by about 12.5 dpc. This difference was maintained until 15.5 dpc when expression levels started to drop in most tissues, with those of the nervous system, tooth, and kidney being exceptions. Strongly expressed in early mesenchyme. The expression decreased as the mesenchyme differentiated.</text>
</comment>
<comment type="disruption phenotype">
    <text evidence="15">Knockouts show reduced viability with reduced growth and a shortened skull (PubMed:30973865). Mutants show increased thresholds across all frequencies associated with variable amounts of accumulated fluid and exudate containing inflammatory cells in the middle ear, suggesting predisposition to otitis media. The middle ear mucosa appear thickened with granulation tissue in sections and the luminal surface show an open Eustachian tube but abundant clusters of goblet cells with fewer ciliated epithelial cells (PubMed:30973865).</text>
</comment>
<comment type="similarity">
    <text evidence="17">Belongs to the 14-3-3 family.</text>
</comment>
<keyword id="KW-0007">Acetylation</keyword>
<keyword id="KW-0963">Cytoplasm</keyword>
<keyword id="KW-0903">Direct protein sequencing</keyword>
<keyword id="KW-1017">Isopeptide bond</keyword>
<keyword id="KW-0539">Nucleus</keyword>
<keyword id="KW-0597">Phosphoprotein</keyword>
<keyword id="KW-1185">Reference proteome</keyword>
<keyword id="KW-0832">Ubl conjugation</keyword>
<protein>
    <recommendedName>
        <fullName>14-3-3 protein epsilon</fullName>
        <shortName>14-3-3E</shortName>
    </recommendedName>
</protein>
<sequence length="255" mass="29174">MDDREDLVYQAKLAEQAERYDEMVESMKKVAGMDVELTVEERNLLSVAYKNVIGARRASWRIISSIEQKEENKGGEDKLKMIREYRQMVETELKLICCDILDVLDKHLIPAANTGESKVFYYKMKGDYHRYLAEFATGNDRKEAAENSLVAYKAASDIAMTELPPTHPIRLGLALNFSVFYYEILNSPDRACRLAKAAFDDAIAELDTLSEESYKDSTLIMQLLRDNLTLWTSDMQGDGEEQNKEALQDVEDENQ</sequence>
<evidence type="ECO:0000250" key="1"/>
<evidence type="ECO:0000250" key="2">
    <source>
        <dbReference type="UniProtKB" id="P62258"/>
    </source>
</evidence>
<evidence type="ECO:0000250" key="3">
    <source>
        <dbReference type="UniProtKB" id="P62260"/>
    </source>
</evidence>
<evidence type="ECO:0000250" key="4">
    <source>
        <dbReference type="UniProtKB" id="P62261"/>
    </source>
</evidence>
<evidence type="ECO:0000256" key="5">
    <source>
        <dbReference type="SAM" id="MobiDB-lite"/>
    </source>
</evidence>
<evidence type="ECO:0000269" key="6">
    <source>
    </source>
</evidence>
<evidence type="ECO:0000269" key="7">
    <source>
    </source>
</evidence>
<evidence type="ECO:0000269" key="8">
    <source>
    </source>
</evidence>
<evidence type="ECO:0000269" key="9">
    <source>
    </source>
</evidence>
<evidence type="ECO:0000269" key="10">
    <source>
    </source>
</evidence>
<evidence type="ECO:0000269" key="11">
    <source>
    </source>
</evidence>
<evidence type="ECO:0000269" key="12">
    <source>
    </source>
</evidence>
<evidence type="ECO:0000269" key="13">
    <source>
    </source>
</evidence>
<evidence type="ECO:0000269" key="14">
    <source>
    </source>
</evidence>
<evidence type="ECO:0000269" key="15">
    <source>
    </source>
</evidence>
<evidence type="ECO:0000269" key="16">
    <source>
    </source>
</evidence>
<evidence type="ECO:0000305" key="17"/>
<evidence type="ECO:0007744" key="18">
    <source>
    </source>
</evidence>
<gene>
    <name type="primary">Ywhae</name>
</gene>
<feature type="chain" id="PRO_0000058619" description="14-3-3 protein epsilon">
    <location>
        <begin position="1"/>
        <end position="255"/>
    </location>
</feature>
<feature type="region of interest" description="Disordered" evidence="5">
    <location>
        <begin position="234"/>
        <end position="255"/>
    </location>
</feature>
<feature type="site" description="Interaction with phosphoserine on interacting protein" evidence="1">
    <location>
        <position position="57"/>
    </location>
</feature>
<feature type="site" description="Interaction with phosphoserine on interacting protein" evidence="1">
    <location>
        <position position="130"/>
    </location>
</feature>
<feature type="modified residue" description="N-acetylmethionine" evidence="2">
    <location>
        <position position="1"/>
    </location>
</feature>
<feature type="modified residue" description="N6-acetyllysine; alternate" evidence="2">
    <location>
        <position position="50"/>
    </location>
</feature>
<feature type="modified residue" description="Phosphoserine" evidence="3">
    <location>
        <position position="65"/>
    </location>
</feature>
<feature type="modified residue" description="N6-acetyllysine" evidence="2">
    <location>
        <position position="69"/>
    </location>
</feature>
<feature type="modified residue" description="N6-acetyllysine" evidence="2">
    <location>
        <position position="118"/>
    </location>
</feature>
<feature type="modified residue" description="N6-acetyllysine" evidence="2">
    <location>
        <position position="123"/>
    </location>
</feature>
<feature type="modified residue" description="Phosphotyrosine" evidence="3">
    <location>
        <position position="131"/>
    </location>
</feature>
<feature type="modified residue" description="Phosphothreonine" evidence="3">
    <location>
        <position position="137"/>
    </location>
</feature>
<feature type="modified residue" description="Phosphoserine" evidence="18">
    <location>
        <position position="210"/>
    </location>
</feature>
<feature type="modified residue" description="Phosphothreonine" evidence="2">
    <location>
        <position position="232"/>
    </location>
</feature>
<feature type="cross-link" description="Glycyl lysine isopeptide (Lys-Gly) (interchain with G-Cter in SUMO2); alternate" evidence="2">
    <location>
        <position position="50"/>
    </location>
</feature>
<proteinExistence type="evidence at protein level"/>
<accession>P62259</accession>
<accession>P29360</accession>
<accession>P42655</accession>
<accession>Q63631</accession>
<dbReference type="EMBL" id="Z19599">
    <property type="protein sequence ID" value="CAA79659.1"/>
    <property type="molecule type" value="mRNA"/>
</dbReference>
<dbReference type="EMBL" id="D87663">
    <property type="protein sequence ID" value="BAA13424.1"/>
    <property type="molecule type" value="mRNA"/>
</dbReference>
<dbReference type="EMBL" id="AF483478">
    <property type="protein sequence ID" value="AAL90752.1"/>
    <property type="molecule type" value="mRNA"/>
</dbReference>
<dbReference type="EMBL" id="AF483479">
    <property type="protein sequence ID" value="AAL90753.1"/>
    <property type="molecule type" value="mRNA"/>
</dbReference>
<dbReference type="EMBL" id="BC058686">
    <property type="protein sequence ID" value="AAH58686.1"/>
    <property type="molecule type" value="mRNA"/>
</dbReference>
<dbReference type="CCDS" id="CCDS25056.1"/>
<dbReference type="PIR" id="I48337">
    <property type="entry name" value="S31975"/>
</dbReference>
<dbReference type="RefSeq" id="NP_033562.3">
    <property type="nucleotide sequence ID" value="NM_009536.4"/>
</dbReference>
<dbReference type="SMR" id="P62259"/>
<dbReference type="BioGRID" id="204619">
    <property type="interactions" value="330"/>
</dbReference>
<dbReference type="CORUM" id="P62259"/>
<dbReference type="FunCoup" id="P62259">
    <property type="interactions" value="3762"/>
</dbReference>
<dbReference type="IntAct" id="P62259">
    <property type="interactions" value="44"/>
</dbReference>
<dbReference type="MINT" id="P62259"/>
<dbReference type="STRING" id="10090.ENSMUSP00000070993"/>
<dbReference type="GlyGen" id="P62259">
    <property type="glycosylation" value="2 sites, 1 N-linked glycan (1 site), 1 O-linked glycan (1 site)"/>
</dbReference>
<dbReference type="iPTMnet" id="P62259"/>
<dbReference type="MetOSite" id="P62259"/>
<dbReference type="PhosphoSitePlus" id="P62259"/>
<dbReference type="SwissPalm" id="P62259"/>
<dbReference type="REPRODUCTION-2DPAGE" id="P62259"/>
<dbReference type="jPOST" id="P62259"/>
<dbReference type="PaxDb" id="10090-ENSMUSP00000070993"/>
<dbReference type="PeptideAtlas" id="P62259"/>
<dbReference type="ProteomicsDB" id="285810"/>
<dbReference type="Pumba" id="P62259"/>
<dbReference type="Antibodypedia" id="1898">
    <property type="antibodies" value="518 antibodies from 40 providers"/>
</dbReference>
<dbReference type="DNASU" id="22627"/>
<dbReference type="Ensembl" id="ENSMUST00000067664.10">
    <property type="protein sequence ID" value="ENSMUSP00000070993.4"/>
    <property type="gene ID" value="ENSMUSG00000020849.14"/>
</dbReference>
<dbReference type="GeneID" id="22627"/>
<dbReference type="KEGG" id="mmu:22627"/>
<dbReference type="UCSC" id="uc007ket.2">
    <property type="organism name" value="mouse"/>
</dbReference>
<dbReference type="AGR" id="MGI:894689"/>
<dbReference type="CTD" id="7531"/>
<dbReference type="MGI" id="MGI:894689">
    <property type="gene designation" value="Ywhae"/>
</dbReference>
<dbReference type="VEuPathDB" id="HostDB:ENSMUSG00000020849"/>
<dbReference type="eggNOG" id="KOG0841">
    <property type="taxonomic scope" value="Eukaryota"/>
</dbReference>
<dbReference type="GeneTree" id="ENSGT01110000267238"/>
<dbReference type="HOGENOM" id="CLU_058290_0_0_1"/>
<dbReference type="InParanoid" id="P62259"/>
<dbReference type="OMA" id="SKGTDKH"/>
<dbReference type="OrthoDB" id="10260625at2759"/>
<dbReference type="PhylomeDB" id="P62259"/>
<dbReference type="TreeFam" id="TF102003"/>
<dbReference type="Reactome" id="R-MMU-111447">
    <property type="pathway name" value="Activation of BAD and translocation to mitochondria"/>
</dbReference>
<dbReference type="Reactome" id="R-MMU-2028269">
    <property type="pathway name" value="Signaling by Hippo"/>
</dbReference>
<dbReference type="Reactome" id="R-MMU-205025">
    <property type="pathway name" value="NADE modulates death signalling"/>
</dbReference>
<dbReference type="Reactome" id="R-MMU-2565942">
    <property type="pathway name" value="Regulation of PLK1 Activity at G2/M Transition"/>
</dbReference>
<dbReference type="Reactome" id="R-MMU-3371453">
    <property type="pathway name" value="Regulation of HSF1-mediated heat shock response"/>
</dbReference>
<dbReference type="Reactome" id="R-MMU-3371511">
    <property type="pathway name" value="HSF1 activation"/>
</dbReference>
<dbReference type="Reactome" id="R-MMU-380259">
    <property type="pathway name" value="Loss of Nlp from mitotic centrosomes"/>
</dbReference>
<dbReference type="Reactome" id="R-MMU-380270">
    <property type="pathway name" value="Recruitment of mitotic centrosome proteins and complexes"/>
</dbReference>
<dbReference type="Reactome" id="R-MMU-380284">
    <property type="pathway name" value="Loss of proteins required for interphase microtubule organization from the centrosome"/>
</dbReference>
<dbReference type="Reactome" id="R-MMU-380320">
    <property type="pathway name" value="Recruitment of NuMA to mitotic centrosomes"/>
</dbReference>
<dbReference type="Reactome" id="R-MMU-5620912">
    <property type="pathway name" value="Anchoring of the basal body to the plasma membrane"/>
</dbReference>
<dbReference type="Reactome" id="R-MMU-5625740">
    <property type="pathway name" value="RHO GTPases activate PKNs"/>
</dbReference>
<dbReference type="Reactome" id="R-MMU-5628897">
    <property type="pathway name" value="TP53 Regulates Metabolic Genes"/>
</dbReference>
<dbReference type="Reactome" id="R-MMU-75035">
    <property type="pathway name" value="Chk1/Chk2(Cds1) mediated inactivation of Cyclin B:Cdk1 complex"/>
</dbReference>
<dbReference type="Reactome" id="R-MMU-8854518">
    <property type="pathway name" value="AURKA Activation by TPX2"/>
</dbReference>
<dbReference type="Reactome" id="R-MMU-8876198">
    <property type="pathway name" value="RAB GEFs exchange GTP for GDP on RABs"/>
</dbReference>
<dbReference type="BioGRID-ORCS" id="22627">
    <property type="hits" value="19 hits in 116 CRISPR screens"/>
</dbReference>
<dbReference type="CD-CODE" id="CE726F99">
    <property type="entry name" value="Postsynaptic density"/>
</dbReference>
<dbReference type="ChiTaRS" id="Ywhae">
    <property type="organism name" value="mouse"/>
</dbReference>
<dbReference type="PRO" id="PR:P62259"/>
<dbReference type="Proteomes" id="UP000000589">
    <property type="component" value="Chromosome 11"/>
</dbReference>
<dbReference type="RNAct" id="P62259">
    <property type="molecule type" value="protein"/>
</dbReference>
<dbReference type="Bgee" id="ENSMUSG00000020849">
    <property type="expression patterns" value="Expressed in metanephric ureteric bud and 279 other cell types or tissues"/>
</dbReference>
<dbReference type="ExpressionAtlas" id="P62259">
    <property type="expression patterns" value="baseline and differential"/>
</dbReference>
<dbReference type="GO" id="GO:0005737">
    <property type="term" value="C:cytoplasm"/>
    <property type="evidence" value="ECO:0000314"/>
    <property type="project" value="MGI"/>
</dbReference>
<dbReference type="GO" id="GO:0005829">
    <property type="term" value="C:cytosol"/>
    <property type="evidence" value="ECO:0000304"/>
    <property type="project" value="Reactome"/>
</dbReference>
<dbReference type="GO" id="GO:0005783">
    <property type="term" value="C:endoplasmic reticulum"/>
    <property type="evidence" value="ECO:0007669"/>
    <property type="project" value="Ensembl"/>
</dbReference>
<dbReference type="GO" id="GO:0042470">
    <property type="term" value="C:melanosome"/>
    <property type="evidence" value="ECO:0007669"/>
    <property type="project" value="UniProtKB-SubCell"/>
</dbReference>
<dbReference type="GO" id="GO:0005739">
    <property type="term" value="C:mitochondrion"/>
    <property type="evidence" value="ECO:0007005"/>
    <property type="project" value="MGI"/>
</dbReference>
<dbReference type="GO" id="GO:0005634">
    <property type="term" value="C:nucleus"/>
    <property type="evidence" value="ECO:0000250"/>
    <property type="project" value="UniProtKB"/>
</dbReference>
<dbReference type="GO" id="GO:0005886">
    <property type="term" value="C:plasma membrane"/>
    <property type="evidence" value="ECO:0007669"/>
    <property type="project" value="Ensembl"/>
</dbReference>
<dbReference type="GO" id="GO:0019855">
    <property type="term" value="F:calcium channel inhibitor activity"/>
    <property type="evidence" value="ECO:0007669"/>
    <property type="project" value="Ensembl"/>
</dbReference>
<dbReference type="GO" id="GO:0042826">
    <property type="term" value="F:histone deacetylase binding"/>
    <property type="evidence" value="ECO:0007669"/>
    <property type="project" value="Ensembl"/>
</dbReference>
<dbReference type="GO" id="GO:0042802">
    <property type="term" value="F:identical protein binding"/>
    <property type="evidence" value="ECO:0007669"/>
    <property type="project" value="Ensembl"/>
</dbReference>
<dbReference type="GO" id="GO:0050815">
    <property type="term" value="F:phosphoserine residue binding"/>
    <property type="evidence" value="ECO:0007669"/>
    <property type="project" value="Ensembl"/>
</dbReference>
<dbReference type="GO" id="GO:0015459">
    <property type="term" value="F:potassium channel regulator activity"/>
    <property type="evidence" value="ECO:0007669"/>
    <property type="project" value="Ensembl"/>
</dbReference>
<dbReference type="GO" id="GO:0019904">
    <property type="term" value="F:protein domain specific binding"/>
    <property type="evidence" value="ECO:0000314"/>
    <property type="project" value="MGI"/>
</dbReference>
<dbReference type="GO" id="GO:0046982">
    <property type="term" value="F:protein heterodimerization activity"/>
    <property type="evidence" value="ECO:0007669"/>
    <property type="project" value="Ensembl"/>
</dbReference>
<dbReference type="GO" id="GO:0019903">
    <property type="term" value="F:protein phosphatase binding"/>
    <property type="evidence" value="ECO:0000353"/>
    <property type="project" value="MGI"/>
</dbReference>
<dbReference type="GO" id="GO:0004864">
    <property type="term" value="F:protein phosphatase inhibitor activity"/>
    <property type="evidence" value="ECO:0000314"/>
    <property type="project" value="MGI"/>
</dbReference>
<dbReference type="GO" id="GO:0140311">
    <property type="term" value="F:protein sequestering activity"/>
    <property type="evidence" value="ECO:0007669"/>
    <property type="project" value="Ensembl"/>
</dbReference>
<dbReference type="GO" id="GO:0097110">
    <property type="term" value="F:scaffold protein binding"/>
    <property type="evidence" value="ECO:0007669"/>
    <property type="project" value="Ensembl"/>
</dbReference>
<dbReference type="GO" id="GO:0035591">
    <property type="term" value="F:signaling adaptor activity"/>
    <property type="evidence" value="ECO:0007669"/>
    <property type="project" value="Ensembl"/>
</dbReference>
<dbReference type="GO" id="GO:0044325">
    <property type="term" value="F:transmembrane transporter binding"/>
    <property type="evidence" value="ECO:0007669"/>
    <property type="project" value="Ensembl"/>
</dbReference>
<dbReference type="GO" id="GO:0031625">
    <property type="term" value="F:ubiquitin protein ligase binding"/>
    <property type="evidence" value="ECO:0007669"/>
    <property type="project" value="Ensembl"/>
</dbReference>
<dbReference type="GO" id="GO:0034605">
    <property type="term" value="P:cellular response to heat"/>
    <property type="evidence" value="ECO:0000250"/>
    <property type="project" value="UniProtKB"/>
</dbReference>
<dbReference type="GO" id="GO:0021987">
    <property type="term" value="P:cerebral cortex development"/>
    <property type="evidence" value="ECO:0000315"/>
    <property type="project" value="MGI"/>
</dbReference>
<dbReference type="GO" id="GO:0002753">
    <property type="term" value="P:cytoplasmic pattern recognition receptor signaling pathway"/>
    <property type="evidence" value="ECO:0007669"/>
    <property type="project" value="Ensembl"/>
</dbReference>
<dbReference type="GO" id="GO:0021766">
    <property type="term" value="P:hippocampus development"/>
    <property type="evidence" value="ECO:0000315"/>
    <property type="project" value="MGI"/>
</dbReference>
<dbReference type="GO" id="GO:0030007">
    <property type="term" value="P:intracellular potassium ion homeostasis"/>
    <property type="evidence" value="ECO:0007669"/>
    <property type="project" value="Ensembl"/>
</dbReference>
<dbReference type="GO" id="GO:0000165">
    <property type="term" value="P:MAPK cascade"/>
    <property type="evidence" value="ECO:0000250"/>
    <property type="project" value="UniProtKB"/>
</dbReference>
<dbReference type="GO" id="GO:1905913">
    <property type="term" value="P:negative regulation of calcium ion export across plasma membrane"/>
    <property type="evidence" value="ECO:0007669"/>
    <property type="project" value="Ensembl"/>
</dbReference>
<dbReference type="GO" id="GO:0034122">
    <property type="term" value="P:negative regulation of toll-like receptor signaling pathway"/>
    <property type="evidence" value="ECO:0007669"/>
    <property type="project" value="Ensembl"/>
</dbReference>
<dbReference type="GO" id="GO:0001764">
    <property type="term" value="P:neuron migration"/>
    <property type="evidence" value="ECO:0000315"/>
    <property type="project" value="MGI"/>
</dbReference>
<dbReference type="GO" id="GO:0035332">
    <property type="term" value="P:positive regulation of hippo signaling"/>
    <property type="evidence" value="ECO:0007669"/>
    <property type="project" value="Ensembl"/>
</dbReference>
<dbReference type="GO" id="GO:0046827">
    <property type="term" value="P:positive regulation of protein export from nucleus"/>
    <property type="evidence" value="ECO:0000250"/>
    <property type="project" value="UniProtKB"/>
</dbReference>
<dbReference type="GO" id="GO:0070972">
    <property type="term" value="P:protein localization to endoplasmic reticulum"/>
    <property type="evidence" value="ECO:0007669"/>
    <property type="project" value="Ensembl"/>
</dbReference>
<dbReference type="GO" id="GO:0034504">
    <property type="term" value="P:protein localization to nucleus"/>
    <property type="evidence" value="ECO:0000250"/>
    <property type="project" value="UniProtKB"/>
</dbReference>
<dbReference type="GO" id="GO:0006605">
    <property type="term" value="P:protein targeting"/>
    <property type="evidence" value="ECO:0000314"/>
    <property type="project" value="MGI"/>
</dbReference>
<dbReference type="GO" id="GO:0051480">
    <property type="term" value="P:regulation of cytosolic calcium ion concentration"/>
    <property type="evidence" value="ECO:0007669"/>
    <property type="project" value="Ensembl"/>
</dbReference>
<dbReference type="GO" id="GO:0060306">
    <property type="term" value="P:regulation of membrane repolarization"/>
    <property type="evidence" value="ECO:0007669"/>
    <property type="project" value="Ensembl"/>
</dbReference>
<dbReference type="GO" id="GO:1901379">
    <property type="term" value="P:regulation of potassium ion transmembrane transport"/>
    <property type="evidence" value="ECO:0007669"/>
    <property type="project" value="Ensembl"/>
</dbReference>
<dbReference type="CDD" id="cd10020">
    <property type="entry name" value="14-3-3_epsilon"/>
    <property type="match status" value="1"/>
</dbReference>
<dbReference type="FunFam" id="1.20.190.20:FF:000002">
    <property type="entry name" value="14-3-3 protein epsilon"/>
    <property type="match status" value="1"/>
</dbReference>
<dbReference type="Gene3D" id="1.20.190.20">
    <property type="entry name" value="14-3-3 domain"/>
    <property type="match status" value="1"/>
</dbReference>
<dbReference type="InterPro" id="IPR000308">
    <property type="entry name" value="14-3-3"/>
</dbReference>
<dbReference type="InterPro" id="IPR023409">
    <property type="entry name" value="14-3-3_CS"/>
</dbReference>
<dbReference type="InterPro" id="IPR036815">
    <property type="entry name" value="14-3-3_dom_sf"/>
</dbReference>
<dbReference type="InterPro" id="IPR023410">
    <property type="entry name" value="14-3-3_domain"/>
</dbReference>
<dbReference type="PANTHER" id="PTHR18860">
    <property type="entry name" value="14-3-3 PROTEIN"/>
    <property type="match status" value="1"/>
</dbReference>
<dbReference type="Pfam" id="PF00244">
    <property type="entry name" value="14-3-3"/>
    <property type="match status" value="1"/>
</dbReference>
<dbReference type="PIRSF" id="PIRSF000868">
    <property type="entry name" value="14-3-3"/>
    <property type="match status" value="1"/>
</dbReference>
<dbReference type="PRINTS" id="PR00305">
    <property type="entry name" value="1433ZETA"/>
</dbReference>
<dbReference type="SMART" id="SM00101">
    <property type="entry name" value="14_3_3"/>
    <property type="match status" value="1"/>
</dbReference>
<dbReference type="SUPFAM" id="SSF48445">
    <property type="entry name" value="14-3-3 protein"/>
    <property type="match status" value="1"/>
</dbReference>
<dbReference type="PROSITE" id="PS00796">
    <property type="entry name" value="1433_1"/>
    <property type="match status" value="1"/>
</dbReference>
<dbReference type="PROSITE" id="PS00797">
    <property type="entry name" value="1433_2"/>
    <property type="match status" value="1"/>
</dbReference>